<protein>
    <recommendedName>
        <fullName>Prospore formation at selected spindle poles protein 1</fullName>
    </recommendedName>
    <alternativeName>
        <fullName>Accumulates dyads protein 1</fullName>
    </alternativeName>
</protein>
<accession>P38872</accession>
<accession>D3DLD3</accession>
<sequence length="237" mass="27884">MNQGYTQLSAPELKETKTSKLNKMNNFRSSPIAEIINKIPPDCGKIQNTTFPEFNPALRRRQHEQWPAYEKPIRVTDSMSPQLSSINCLPNLYPHGTLPLPNPYLSYLNHIEKVNCQDVKFSNWSVLHNSNNGFEIPTYFSPRTTQNMPCSEKVESWLERLPIFVGFDGYLFTNCFDYEYMLDWEETEFTFEKTSCMETDYSKALTDTDIIYIQEKKIEALIRNQYLKEYEFSQKDF</sequence>
<keyword id="KW-0963">Cytoplasm</keyword>
<keyword id="KW-0206">Cytoskeleton</keyword>
<keyword id="KW-0539">Nucleus</keyword>
<keyword id="KW-1185">Reference proteome</keyword>
<keyword id="KW-0749">Sporulation</keyword>
<name>ADY1_YEAST</name>
<comment type="function">
    <text evidence="1">Involved in the pathway that organizes the shaping and sizing of the prospore membrane (PSM) during sporulation. Required to localize MPC54 to all four spindle pole bodies, and localize DON1 and SPO14 to four prospore membranes.</text>
</comment>
<comment type="interaction">
    <interactant intactId="EBI-24859">
        <id>P38872</id>
    </interactant>
    <interactant intactId="EBI-14024">
        <id>P40555</id>
        <label>NAS2</label>
    </interactant>
    <organismsDiffer>false</organismsDiffer>
    <experiments>3</experiments>
</comment>
<comment type="subcellular location">
    <subcellularLocation>
        <location evidence="1">Nucleus</location>
    </subcellularLocation>
    <subcellularLocation>
        <location evidence="1">Cytoplasm</location>
        <location evidence="1">Cytoskeleton</location>
        <location evidence="1">Microtubule organizing center</location>
        <location evidence="1">Spindle pole body</location>
    </subcellularLocation>
    <text>Nuclear in mononucleate meiotic cells. May not be localized to the spindle pole body or prospore membrane.</text>
</comment>
<gene>
    <name type="primary">PFS1</name>
    <name type="synonym">ADY1</name>
    <name type="ordered locus">YHR185C</name>
</gene>
<reference key="1">
    <citation type="journal article" date="1994" name="Science">
        <title>Complete nucleotide sequence of Saccharomyces cerevisiae chromosome VIII.</title>
        <authorList>
            <person name="Johnston M."/>
            <person name="Andrews S."/>
            <person name="Brinkman R."/>
            <person name="Cooper J."/>
            <person name="Ding H."/>
            <person name="Dover J."/>
            <person name="Du Z."/>
            <person name="Favello A."/>
            <person name="Fulton L."/>
            <person name="Gattung S."/>
            <person name="Geisel C."/>
            <person name="Kirsten J."/>
            <person name="Kucaba T."/>
            <person name="Hillier L.W."/>
            <person name="Jier M."/>
            <person name="Johnston L."/>
            <person name="Langston Y."/>
            <person name="Latreille P."/>
            <person name="Louis E.J."/>
            <person name="Macri C."/>
            <person name="Mardis E."/>
            <person name="Menezes S."/>
            <person name="Mouser L."/>
            <person name="Nhan M."/>
            <person name="Rifkin L."/>
            <person name="Riles L."/>
            <person name="St Peter H."/>
            <person name="Trevaskis E."/>
            <person name="Vaughan K."/>
            <person name="Vignati D."/>
            <person name="Wilcox L."/>
            <person name="Wohldman P."/>
            <person name="Waterston R."/>
            <person name="Wilson R."/>
            <person name="Vaudin M."/>
        </authorList>
    </citation>
    <scope>NUCLEOTIDE SEQUENCE [LARGE SCALE GENOMIC DNA]</scope>
    <source>
        <strain>ATCC 204508 / S288c</strain>
    </source>
</reference>
<reference key="2">
    <citation type="journal article" date="2014" name="G3 (Bethesda)">
        <title>The reference genome sequence of Saccharomyces cerevisiae: Then and now.</title>
        <authorList>
            <person name="Engel S.R."/>
            <person name="Dietrich F.S."/>
            <person name="Fisk D.G."/>
            <person name="Binkley G."/>
            <person name="Balakrishnan R."/>
            <person name="Costanzo M.C."/>
            <person name="Dwight S.S."/>
            <person name="Hitz B.C."/>
            <person name="Karra K."/>
            <person name="Nash R.S."/>
            <person name="Weng S."/>
            <person name="Wong E.D."/>
            <person name="Lloyd P."/>
            <person name="Skrzypek M.S."/>
            <person name="Miyasato S.R."/>
            <person name="Simison M."/>
            <person name="Cherry J.M."/>
        </authorList>
    </citation>
    <scope>GENOME REANNOTATION</scope>
    <source>
        <strain>ATCC 204508 / S288c</strain>
    </source>
</reference>
<reference key="3">
    <citation type="journal article" date="2001" name="Mol. Biol. Cell">
        <title>ADY1, a novel gene required for prospore membrane formation at selected spindle poles in Saccharomyces cerevisiae.</title>
        <authorList>
            <person name="Deng C."/>
            <person name="Saunders W.S."/>
        </authorList>
    </citation>
    <scope>FUNCTION</scope>
    <scope>SUBCELLULAR LOCATION</scope>
</reference>
<evidence type="ECO:0000269" key="1">
    <source>
    </source>
</evidence>
<organism>
    <name type="scientific">Saccharomyces cerevisiae (strain ATCC 204508 / S288c)</name>
    <name type="common">Baker's yeast</name>
    <dbReference type="NCBI Taxonomy" id="559292"/>
    <lineage>
        <taxon>Eukaryota</taxon>
        <taxon>Fungi</taxon>
        <taxon>Dikarya</taxon>
        <taxon>Ascomycota</taxon>
        <taxon>Saccharomycotina</taxon>
        <taxon>Saccharomycetes</taxon>
        <taxon>Saccharomycetales</taxon>
        <taxon>Saccharomycetaceae</taxon>
        <taxon>Saccharomyces</taxon>
    </lineage>
</organism>
<proteinExistence type="evidence at protein level"/>
<feature type="chain" id="PRO_0000064460" description="Prospore formation at selected spindle poles protein 1">
    <location>
        <begin position="1"/>
        <end position="237"/>
    </location>
</feature>
<dbReference type="EMBL" id="U00030">
    <property type="protein sequence ID" value="AAB68363.1"/>
    <property type="molecule type" value="Genomic_DNA"/>
</dbReference>
<dbReference type="EMBL" id="BK006934">
    <property type="protein sequence ID" value="DAA06877.1"/>
    <property type="molecule type" value="Genomic_DNA"/>
</dbReference>
<dbReference type="PIR" id="S46685">
    <property type="entry name" value="S46685"/>
</dbReference>
<dbReference type="RefSeq" id="NP_012055.3">
    <property type="nucleotide sequence ID" value="NM_001179316.3"/>
</dbReference>
<dbReference type="BioGRID" id="36618">
    <property type="interactions" value="92"/>
</dbReference>
<dbReference type="DIP" id="DIP-1372N"/>
<dbReference type="FunCoup" id="P38872">
    <property type="interactions" value="77"/>
</dbReference>
<dbReference type="IntAct" id="P38872">
    <property type="interactions" value="6"/>
</dbReference>
<dbReference type="MINT" id="P38872"/>
<dbReference type="STRING" id="4932.YHR185C"/>
<dbReference type="PaxDb" id="4932-YHR185C"/>
<dbReference type="PeptideAtlas" id="P38872"/>
<dbReference type="EnsemblFungi" id="YHR185C_mRNA">
    <property type="protein sequence ID" value="YHR185C"/>
    <property type="gene ID" value="YHR185C"/>
</dbReference>
<dbReference type="GeneID" id="856591"/>
<dbReference type="KEGG" id="sce:YHR185C"/>
<dbReference type="AGR" id="SGD:S000001228"/>
<dbReference type="SGD" id="S000001228">
    <property type="gene designation" value="PFS1"/>
</dbReference>
<dbReference type="VEuPathDB" id="FungiDB:YHR185C"/>
<dbReference type="eggNOG" id="ENOG502SCEP">
    <property type="taxonomic scope" value="Eukaryota"/>
</dbReference>
<dbReference type="HOGENOM" id="CLU_1161934_0_0_1"/>
<dbReference type="InParanoid" id="P38872"/>
<dbReference type="OrthoDB" id="3981267at2759"/>
<dbReference type="BioCyc" id="YEAST:G3O-31215-MONOMER"/>
<dbReference type="BioGRID-ORCS" id="856591">
    <property type="hits" value="0 hits in 10 CRISPR screens"/>
</dbReference>
<dbReference type="PRO" id="PR:P38872"/>
<dbReference type="Proteomes" id="UP000002311">
    <property type="component" value="Chromosome VIII"/>
</dbReference>
<dbReference type="RNAct" id="P38872">
    <property type="molecule type" value="protein"/>
</dbReference>
<dbReference type="GO" id="GO:0005737">
    <property type="term" value="C:cytoplasm"/>
    <property type="evidence" value="ECO:0007669"/>
    <property type="project" value="UniProtKB-KW"/>
</dbReference>
<dbReference type="GO" id="GO:0005634">
    <property type="term" value="C:nucleus"/>
    <property type="evidence" value="ECO:0007669"/>
    <property type="project" value="UniProtKB-SubCell"/>
</dbReference>
<dbReference type="GO" id="GO:0005816">
    <property type="term" value="C:spindle pole body"/>
    <property type="evidence" value="ECO:0007669"/>
    <property type="project" value="UniProtKB-SubCell"/>
</dbReference>
<dbReference type="GO" id="GO:0030476">
    <property type="term" value="P:ascospore wall assembly"/>
    <property type="evidence" value="ECO:0000315"/>
    <property type="project" value="SGD"/>
</dbReference>